<evidence type="ECO:0000250" key="1">
    <source>
        <dbReference type="UniProtKB" id="Q9M6A7"/>
    </source>
</evidence>
<evidence type="ECO:0000255" key="2"/>
<evidence type="ECO:0000255" key="3">
    <source>
        <dbReference type="PROSITE-ProRule" id="PRU00159"/>
    </source>
</evidence>
<evidence type="ECO:0000255" key="4">
    <source>
        <dbReference type="PROSITE-ProRule" id="PRU00498"/>
    </source>
</evidence>
<evidence type="ECO:0000269" key="5">
    <source>
    </source>
</evidence>
<evidence type="ECO:0000303" key="6">
    <source>
    </source>
</evidence>
<evidence type="ECO:0000305" key="7"/>
<evidence type="ECO:0000312" key="8">
    <source>
        <dbReference type="EMBL" id="KRH29397.1"/>
    </source>
</evidence>
<feature type="signal peptide" evidence="2">
    <location>
        <begin position="1"/>
        <end position="23"/>
    </location>
</feature>
<feature type="chain" id="PRO_5014521660" description="Leucine-rich repeat receptor-like kinase protein CLV1a" evidence="2">
    <location>
        <begin position="24"/>
        <end position="981"/>
    </location>
</feature>
<feature type="transmembrane region" description="Helical" evidence="2">
    <location>
        <begin position="639"/>
        <end position="659"/>
    </location>
</feature>
<feature type="repeat" description="LRR 1" evidence="2">
    <location>
        <begin position="96"/>
        <end position="120"/>
    </location>
</feature>
<feature type="repeat" description="LRR 2" evidence="2">
    <location>
        <begin position="122"/>
        <end position="144"/>
    </location>
</feature>
<feature type="repeat" description="LRR 3" evidence="2">
    <location>
        <begin position="145"/>
        <end position="169"/>
    </location>
</feature>
<feature type="repeat" description="LRR 4" evidence="2">
    <location>
        <begin position="170"/>
        <end position="192"/>
    </location>
</feature>
<feature type="repeat" description="LRR 5" evidence="2">
    <location>
        <begin position="193"/>
        <end position="217"/>
    </location>
</feature>
<feature type="repeat" description="LRR 6" evidence="2">
    <location>
        <begin position="219"/>
        <end position="241"/>
    </location>
</feature>
<feature type="repeat" description="LRR 7" evidence="2">
    <location>
        <begin position="242"/>
        <end position="266"/>
    </location>
</feature>
<feature type="repeat" description="LRR 8" evidence="2">
    <location>
        <begin position="267"/>
        <end position="290"/>
    </location>
</feature>
<feature type="repeat" description="LRR 9" evidence="2">
    <location>
        <begin position="292"/>
        <end position="313"/>
    </location>
</feature>
<feature type="repeat" description="LRR 10" evidence="2">
    <location>
        <begin position="314"/>
        <end position="337"/>
    </location>
</feature>
<feature type="repeat" description="LRR 11" evidence="2">
    <location>
        <begin position="338"/>
        <end position="362"/>
    </location>
</feature>
<feature type="repeat" description="LRR 12" evidence="2">
    <location>
        <begin position="364"/>
        <end position="386"/>
    </location>
</feature>
<feature type="repeat" description="LRR 13" evidence="2">
    <location>
        <begin position="388"/>
        <end position="410"/>
    </location>
</feature>
<feature type="repeat" description="LRR 14" evidence="2">
    <location>
        <begin position="411"/>
        <end position="434"/>
    </location>
</feature>
<feature type="repeat" description="LRR 15" evidence="2">
    <location>
        <begin position="435"/>
        <end position="458"/>
    </location>
</feature>
<feature type="repeat" description="LRR 16" evidence="2">
    <location>
        <begin position="460"/>
        <end position="481"/>
    </location>
</feature>
<feature type="repeat" description="LRR 17" evidence="2">
    <location>
        <begin position="482"/>
        <end position="505"/>
    </location>
</feature>
<feature type="repeat" description="LRR 18" evidence="2">
    <location>
        <begin position="507"/>
        <end position="529"/>
    </location>
</feature>
<feature type="repeat" description="LRR 19" evidence="2">
    <location>
        <begin position="530"/>
        <end position="553"/>
    </location>
</feature>
<feature type="repeat" description="LRR 20" evidence="2">
    <location>
        <begin position="554"/>
        <end position="578"/>
    </location>
</feature>
<feature type="repeat" description="LRR 21" evidence="2">
    <location>
        <begin position="580"/>
        <end position="602"/>
    </location>
</feature>
<feature type="domain" description="Protein kinase" evidence="3">
    <location>
        <begin position="690"/>
        <end position="973"/>
    </location>
</feature>
<feature type="active site" description="Proton acceptor" evidence="3">
    <location>
        <position position="815"/>
    </location>
</feature>
<feature type="binding site" evidence="3">
    <location>
        <begin position="696"/>
        <end position="704"/>
    </location>
    <ligand>
        <name>ATP</name>
        <dbReference type="ChEBI" id="CHEBI:30616"/>
    </ligand>
</feature>
<feature type="binding site" evidence="3">
    <location>
        <position position="718"/>
    </location>
    <ligand>
        <name>ATP</name>
        <dbReference type="ChEBI" id="CHEBI:30616"/>
    </ligand>
</feature>
<feature type="glycosylation site" description="N-linked (GlcNAc...) asparagine" evidence="4">
    <location>
        <position position="79"/>
    </location>
</feature>
<feature type="glycosylation site" description="N-linked (GlcNAc...) asparagine" evidence="4">
    <location>
        <position position="101"/>
    </location>
</feature>
<feature type="glycosylation site" description="N-linked (GlcNAc...) asparagine" evidence="4">
    <location>
        <position position="108"/>
    </location>
</feature>
<feature type="glycosylation site" description="N-linked (GlcNAc...) asparagine" evidence="4">
    <location>
        <position position="127"/>
    </location>
</feature>
<feature type="glycosylation site" description="N-linked (GlcNAc...) asparagine" evidence="4">
    <location>
        <position position="157"/>
    </location>
</feature>
<feature type="glycosylation site" description="N-linked (GlcNAc...) asparagine" evidence="4">
    <location>
        <position position="254"/>
    </location>
</feature>
<feature type="glycosylation site" description="N-linked (GlcNAc...) asparagine" evidence="4">
    <location>
        <position position="278"/>
    </location>
</feature>
<feature type="glycosylation site" description="N-linked (GlcNAc...) asparagine" evidence="4">
    <location>
        <position position="316"/>
    </location>
</feature>
<feature type="glycosylation site" description="N-linked (GlcNAc...) asparagine" evidence="4">
    <location>
        <position position="350"/>
    </location>
</feature>
<feature type="glycosylation site" description="N-linked (GlcNAc...) asparagine" evidence="4">
    <location>
        <position position="512"/>
    </location>
</feature>
<feature type="glycosylation site" description="N-linked (GlcNAc...) asparagine" evidence="4">
    <location>
        <position position="517"/>
    </location>
</feature>
<feature type="glycosylation site" description="N-linked (GlcNAc...) asparagine" evidence="4">
    <location>
        <position position="552"/>
    </location>
</feature>
<feature type="glycosylation site" description="N-linked (GlcNAc...) asparagine" evidence="4">
    <location>
        <position position="560"/>
    </location>
</feature>
<feature type="glycosylation site" description="N-linked (GlcNAc...) asparagine" evidence="4">
    <location>
        <position position="622"/>
    </location>
</feature>
<feature type="sequence conflict" description="In Ref. 1; AAF59905." evidence="7" ref="1">
    <original>S</original>
    <variation>F</variation>
    <location>
        <position position="971"/>
    </location>
</feature>
<accession>A0A0R0HPY5</accession>
<accession>Q9M6A8</accession>
<sequence length="981" mass="108507">MRSCVCYTLLLFVFFIWLHVATCSSFSDMDALLKLKESMKGDRAKDDALHDWKFSTSLSAHCFFSGVSCDQELRVVAINVSFVPLFGHVPPEIGELDKLENLTISQNNLTGELPKELAALTSLKHLNISHNVFSGYFPGKIILPMTELEVLDVYDNNFTGSLPEEFVKLEKLKYLKLDGNYFSGSIPESYSEFKSLEFLSLSTNSLSGNIPKSLSKLKTLRILKLGYNNAYEGGIPPEFGTMESLKYLDLSSCNLSGEIPPSLANMRNLDTLFLQMNNLTGTIPSELSDMVSLMSLDLSFNGLTGEIPTRFSQLKNLTLMNFFHNNLRGSVPSFVGELPNLETLQLWENNFSSELPQNLGQNGKFKFFDVTKNHFSGLIPRDLCKSGRLQTFLITDNFFHGPIPNEIANCKSLTKIRASNNYLNGAVPSGIFKLPSVTIIELANNRFNGELPPEISGDSLGILTLSNNLFTGKIPPALKNLRALQTLSLDTNEFLGEIPGEVFDLPMLTVVNISGNNLTGPIPTTFTRCVSLAAVDLSRNMLDGEIPKGMKNLTDLSIFNVSINQISGSVPDEIRFMLSLTTLDLSYNNFIGKVPTGGQFLVFSDKSFAGNPNLCSSHSCPNSSLKKRRGPWSLKSTRVIVMVIALATAAILVAGTEYMRRRRKLKLAMTWKLTGFQRLNLKAEEVVECLKEENIIGKGGAGIVYRGSMRNGSDVAIKRLVGAGSGRNDYGFKAEIETVGKIRHRNIMRLLGYVSNKETNLLLYEYMPNGSLGEWLHGAKGGHLKWEMRYKIAVEAAKGLCYLHHDCSPLIIHRDVKSNNILLDAHFEAHVADFGLAKFLYDLGSSQSMSSIAGSYGYIAPEYAYTLKVDEKSDVYSFGVVLLELIIGRKPVGEFGDGVDIVGWVNKTRLELSQPSDAAVVLAVVDPRLSGYPLISVIYMFNIAMMCVKEVGPTRPTMREVVHMLSNPPHSTTHTHNLINL</sequence>
<protein>
    <recommendedName>
        <fullName evidence="7">Leucine-rich repeat receptor-like kinase protein CLV1a</fullName>
        <ecNumber evidence="7">2.7.11.1</ecNumber>
    </recommendedName>
    <alternativeName>
        <fullName evidence="6">CLAVATA1-like protein 1A</fullName>
        <shortName evidence="6">GmCLV1A</shortName>
    </alternativeName>
</protein>
<gene>
    <name evidence="6" type="primary">CLV1A</name>
    <name evidence="8" type="ORF">GLYMA_11G114100</name>
</gene>
<name>CLV1A_SOYBN</name>
<proteinExistence type="evidence at transcript level"/>
<dbReference type="EC" id="2.7.11.1" evidence="7"/>
<dbReference type="EMBL" id="AF197946">
    <property type="protein sequence ID" value="AAF59905.1"/>
    <property type="molecule type" value="mRNA"/>
</dbReference>
<dbReference type="EMBL" id="CM000844">
    <property type="protein sequence ID" value="KRH29397.1"/>
    <property type="molecule type" value="Genomic_DNA"/>
</dbReference>
<dbReference type="PIR" id="T50851">
    <property type="entry name" value="T50851"/>
</dbReference>
<dbReference type="RefSeq" id="NP_001238576.1">
    <property type="nucleotide sequence ID" value="NM_001251647.1"/>
</dbReference>
<dbReference type="SMR" id="A0A0R0HPY5"/>
<dbReference type="FunCoup" id="A0A0R0HPY5">
    <property type="interactions" value="1501"/>
</dbReference>
<dbReference type="STRING" id="3847.A0A0R0HPY5"/>
<dbReference type="GlyCosmos" id="A0A0R0HPY5">
    <property type="glycosylation" value="14 sites, No reported glycans"/>
</dbReference>
<dbReference type="PaxDb" id="3847-GLYMA11G12186.1"/>
<dbReference type="EnsemblPlants" id="KRH29397">
    <property type="protein sequence ID" value="KRH29397"/>
    <property type="gene ID" value="GLYMA_11G114100"/>
</dbReference>
<dbReference type="GeneID" id="732661"/>
<dbReference type="Gramene" id="KRH29397">
    <property type="protein sequence ID" value="KRH29397"/>
    <property type="gene ID" value="GLYMA_11G114100"/>
</dbReference>
<dbReference type="KEGG" id="gmx:732661"/>
<dbReference type="InParanoid" id="A0A0R0HPY5"/>
<dbReference type="OMA" id="IFAGMIH"/>
<dbReference type="OrthoDB" id="676979at2759"/>
<dbReference type="Proteomes" id="UP000008827">
    <property type="component" value="Chromosome 11"/>
</dbReference>
<dbReference type="ExpressionAtlas" id="A0A0R0HPY5">
    <property type="expression patterns" value="baseline and differential"/>
</dbReference>
<dbReference type="GO" id="GO:0016020">
    <property type="term" value="C:membrane"/>
    <property type="evidence" value="ECO:0000318"/>
    <property type="project" value="GO_Central"/>
</dbReference>
<dbReference type="GO" id="GO:0005886">
    <property type="term" value="C:plasma membrane"/>
    <property type="evidence" value="ECO:0007669"/>
    <property type="project" value="UniProtKB-SubCell"/>
</dbReference>
<dbReference type="GO" id="GO:0005524">
    <property type="term" value="F:ATP binding"/>
    <property type="evidence" value="ECO:0007669"/>
    <property type="project" value="UniProtKB-KW"/>
</dbReference>
<dbReference type="GO" id="GO:0106310">
    <property type="term" value="F:protein serine kinase activity"/>
    <property type="evidence" value="ECO:0007669"/>
    <property type="project" value="RHEA"/>
</dbReference>
<dbReference type="GO" id="GO:0004674">
    <property type="term" value="F:protein serine/threonine kinase activity"/>
    <property type="evidence" value="ECO:0007669"/>
    <property type="project" value="UniProtKB-KW"/>
</dbReference>
<dbReference type="GO" id="GO:0033612">
    <property type="term" value="F:receptor serine/threonine kinase binding"/>
    <property type="evidence" value="ECO:0000318"/>
    <property type="project" value="GO_Central"/>
</dbReference>
<dbReference type="GO" id="GO:0030154">
    <property type="term" value="P:cell differentiation"/>
    <property type="evidence" value="ECO:0007669"/>
    <property type="project" value="UniProtKB-KW"/>
</dbReference>
<dbReference type="FunFam" id="3.80.10.10:FF:000275">
    <property type="entry name" value="Leucine-rich repeat receptor-like protein kinase"/>
    <property type="match status" value="1"/>
</dbReference>
<dbReference type="FunFam" id="1.10.510.10:FF:000201">
    <property type="entry name" value="Leucine-rich repeat receptor-like serine/threonine-protein kinase"/>
    <property type="match status" value="1"/>
</dbReference>
<dbReference type="FunFam" id="3.30.200.20:FF:000292">
    <property type="entry name" value="Leucine-rich repeat receptor-like serine/threonine-protein kinase BAM1"/>
    <property type="match status" value="1"/>
</dbReference>
<dbReference type="FunFam" id="3.80.10.10:FF:000560">
    <property type="entry name" value="Leucine-rich repeat receptor-like serine/threonine-protein kinase BAM3"/>
    <property type="match status" value="1"/>
</dbReference>
<dbReference type="FunFam" id="3.80.10.10:FF:000288">
    <property type="entry name" value="LRR receptor-like serine/threonine-protein kinase EFR"/>
    <property type="match status" value="1"/>
</dbReference>
<dbReference type="Gene3D" id="3.30.200.20">
    <property type="entry name" value="Phosphorylase Kinase, domain 1"/>
    <property type="match status" value="1"/>
</dbReference>
<dbReference type="Gene3D" id="3.80.10.10">
    <property type="entry name" value="Ribonuclease Inhibitor"/>
    <property type="match status" value="4"/>
</dbReference>
<dbReference type="Gene3D" id="1.10.510.10">
    <property type="entry name" value="Transferase(Phosphotransferase) domain 1"/>
    <property type="match status" value="1"/>
</dbReference>
<dbReference type="InterPro" id="IPR011009">
    <property type="entry name" value="Kinase-like_dom_sf"/>
</dbReference>
<dbReference type="InterPro" id="IPR001611">
    <property type="entry name" value="Leu-rich_rpt"/>
</dbReference>
<dbReference type="InterPro" id="IPR003591">
    <property type="entry name" value="Leu-rich_rpt_typical-subtyp"/>
</dbReference>
<dbReference type="InterPro" id="IPR032675">
    <property type="entry name" value="LRR_dom_sf"/>
</dbReference>
<dbReference type="InterPro" id="IPR013210">
    <property type="entry name" value="LRR_N_plant-typ"/>
</dbReference>
<dbReference type="InterPro" id="IPR000719">
    <property type="entry name" value="Prot_kinase_dom"/>
</dbReference>
<dbReference type="InterPro" id="IPR001245">
    <property type="entry name" value="Ser-Thr/Tyr_kinase_cat_dom"/>
</dbReference>
<dbReference type="InterPro" id="IPR008271">
    <property type="entry name" value="Ser/Thr_kinase_AS"/>
</dbReference>
<dbReference type="PANTHER" id="PTHR45974:SF181">
    <property type="entry name" value="PROTEIN KINASE DOMAIN-CONTAINING PROTEIN"/>
    <property type="match status" value="1"/>
</dbReference>
<dbReference type="PANTHER" id="PTHR45974">
    <property type="entry name" value="RECEPTOR-LIKE PROTEIN 55"/>
    <property type="match status" value="1"/>
</dbReference>
<dbReference type="Pfam" id="PF00560">
    <property type="entry name" value="LRR_1"/>
    <property type="match status" value="9"/>
</dbReference>
<dbReference type="Pfam" id="PF13855">
    <property type="entry name" value="LRR_8"/>
    <property type="match status" value="1"/>
</dbReference>
<dbReference type="Pfam" id="PF08263">
    <property type="entry name" value="LRRNT_2"/>
    <property type="match status" value="1"/>
</dbReference>
<dbReference type="Pfam" id="PF07714">
    <property type="entry name" value="PK_Tyr_Ser-Thr"/>
    <property type="match status" value="1"/>
</dbReference>
<dbReference type="SMART" id="SM00369">
    <property type="entry name" value="LRR_TYP"/>
    <property type="match status" value="8"/>
</dbReference>
<dbReference type="SMART" id="SM00220">
    <property type="entry name" value="S_TKc"/>
    <property type="match status" value="1"/>
</dbReference>
<dbReference type="SUPFAM" id="SSF52058">
    <property type="entry name" value="L domain-like"/>
    <property type="match status" value="1"/>
</dbReference>
<dbReference type="SUPFAM" id="SSF56112">
    <property type="entry name" value="Protein kinase-like (PK-like)"/>
    <property type="match status" value="1"/>
</dbReference>
<dbReference type="SUPFAM" id="SSF52047">
    <property type="entry name" value="RNI-like"/>
    <property type="match status" value="1"/>
</dbReference>
<dbReference type="PROSITE" id="PS50011">
    <property type="entry name" value="PROTEIN_KINASE_DOM"/>
    <property type="match status" value="1"/>
</dbReference>
<dbReference type="PROSITE" id="PS00108">
    <property type="entry name" value="PROTEIN_KINASE_ST"/>
    <property type="match status" value="1"/>
</dbReference>
<keyword id="KW-0067">ATP-binding</keyword>
<keyword id="KW-1003">Cell membrane</keyword>
<keyword id="KW-0221">Differentiation</keyword>
<keyword id="KW-0325">Glycoprotein</keyword>
<keyword id="KW-0341">Growth regulation</keyword>
<keyword id="KW-0418">Kinase</keyword>
<keyword id="KW-0433">Leucine-rich repeat</keyword>
<keyword id="KW-0472">Membrane</keyword>
<keyword id="KW-0547">Nucleotide-binding</keyword>
<keyword id="KW-1185">Reference proteome</keyword>
<keyword id="KW-0677">Repeat</keyword>
<keyword id="KW-0723">Serine/threonine-protein kinase</keyword>
<keyword id="KW-0732">Signal</keyword>
<keyword id="KW-0808">Transferase</keyword>
<keyword id="KW-0812">Transmembrane</keyword>
<keyword id="KW-1133">Transmembrane helix</keyword>
<reference key="1">
    <citation type="journal article" date="2000" name="Biochim. Biophys. Acta">
        <title>Molecular characterization of two soybean homologs of Arabidopsis thaliana CLAVATA1 from the wild type and fasciation mutant.</title>
        <authorList>
            <person name="Yamamoto E."/>
            <person name="Karakaya H.C."/>
            <person name="Knap H.T."/>
        </authorList>
    </citation>
    <scope>NUCLEOTIDE SEQUENCE [MRNA]</scope>
    <scope>TISSUE SPECIFICITY</scope>
</reference>
<reference key="2">
    <citation type="journal article" date="2010" name="Nature">
        <title>Genome sequence of the palaeopolyploid soybean.</title>
        <authorList>
            <person name="Schmutz J."/>
            <person name="Cannon S.B."/>
            <person name="Schlueter J."/>
            <person name="Ma J."/>
            <person name="Mitros T."/>
            <person name="Nelson W."/>
            <person name="Hyten D.L."/>
            <person name="Song Q."/>
            <person name="Thelen J.J."/>
            <person name="Cheng J."/>
            <person name="Xu D."/>
            <person name="Hellsten U."/>
            <person name="May G.D."/>
            <person name="Yu Y."/>
            <person name="Sakurai T."/>
            <person name="Umezawa T."/>
            <person name="Bhattacharyya M.K."/>
            <person name="Sandhu D."/>
            <person name="Valliyodan B."/>
            <person name="Lindquist E."/>
            <person name="Peto M."/>
            <person name="Grant D."/>
            <person name="Shu S."/>
            <person name="Goodstein D."/>
            <person name="Barry K."/>
            <person name="Futrell-Griggs M."/>
            <person name="Abernathy B."/>
            <person name="Du J."/>
            <person name="Tian Z."/>
            <person name="Zhu L."/>
            <person name="Gill N."/>
            <person name="Joshi T."/>
            <person name="Libault M."/>
            <person name="Sethuraman A."/>
            <person name="Zhang X.-C."/>
            <person name="Shinozaki K."/>
            <person name="Nguyen H.T."/>
            <person name="Wing R.A."/>
            <person name="Cregan P."/>
            <person name="Specht J."/>
            <person name="Grimwood J."/>
            <person name="Rokhsar D."/>
            <person name="Stacey G."/>
            <person name="Shoemaker R.C."/>
            <person name="Jackson S.A."/>
        </authorList>
    </citation>
    <scope>NUCLEOTIDE SEQUENCE [LARGE SCALE GENOMIC DNA]</scope>
    <source>
        <strain>cv. Williams 82</strain>
    </source>
</reference>
<organism>
    <name type="scientific">Glycine max</name>
    <name type="common">Soybean</name>
    <name type="synonym">Glycine hispida</name>
    <dbReference type="NCBI Taxonomy" id="3847"/>
    <lineage>
        <taxon>Eukaryota</taxon>
        <taxon>Viridiplantae</taxon>
        <taxon>Streptophyta</taxon>
        <taxon>Embryophyta</taxon>
        <taxon>Tracheophyta</taxon>
        <taxon>Spermatophyta</taxon>
        <taxon>Magnoliopsida</taxon>
        <taxon>eudicotyledons</taxon>
        <taxon>Gunneridae</taxon>
        <taxon>Pentapetalae</taxon>
        <taxon>rosids</taxon>
        <taxon>fabids</taxon>
        <taxon>Fabales</taxon>
        <taxon>Fabaceae</taxon>
        <taxon>Papilionoideae</taxon>
        <taxon>50 kb inversion clade</taxon>
        <taxon>NPAAA clade</taxon>
        <taxon>indigoferoid/millettioid clade</taxon>
        <taxon>Phaseoleae</taxon>
        <taxon>Glycine</taxon>
        <taxon>Glycine subgen. Soja</taxon>
    </lineage>
</organism>
<comment type="function">
    <text evidence="1">LRR receptor kinase involved in the regulation of plant growth.</text>
</comment>
<comment type="catalytic activity">
    <reaction evidence="7">
        <text>L-seryl-[protein] + ATP = O-phospho-L-seryl-[protein] + ADP + H(+)</text>
        <dbReference type="Rhea" id="RHEA:17989"/>
        <dbReference type="Rhea" id="RHEA-COMP:9863"/>
        <dbReference type="Rhea" id="RHEA-COMP:11604"/>
        <dbReference type="ChEBI" id="CHEBI:15378"/>
        <dbReference type="ChEBI" id="CHEBI:29999"/>
        <dbReference type="ChEBI" id="CHEBI:30616"/>
        <dbReference type="ChEBI" id="CHEBI:83421"/>
        <dbReference type="ChEBI" id="CHEBI:456216"/>
        <dbReference type="EC" id="2.7.11.1"/>
    </reaction>
    <physiologicalReaction direction="left-to-right" evidence="7">
        <dbReference type="Rhea" id="RHEA:17990"/>
    </physiologicalReaction>
</comment>
<comment type="catalytic activity">
    <reaction evidence="7">
        <text>L-threonyl-[protein] + ATP = O-phospho-L-threonyl-[protein] + ADP + H(+)</text>
        <dbReference type="Rhea" id="RHEA:46608"/>
        <dbReference type="Rhea" id="RHEA-COMP:11060"/>
        <dbReference type="Rhea" id="RHEA-COMP:11605"/>
        <dbReference type="ChEBI" id="CHEBI:15378"/>
        <dbReference type="ChEBI" id="CHEBI:30013"/>
        <dbReference type="ChEBI" id="CHEBI:30616"/>
        <dbReference type="ChEBI" id="CHEBI:61977"/>
        <dbReference type="ChEBI" id="CHEBI:456216"/>
        <dbReference type="EC" id="2.7.11.1"/>
    </reaction>
    <physiologicalReaction direction="left-to-right" evidence="7">
        <dbReference type="Rhea" id="RHEA:46609"/>
    </physiologicalReaction>
</comment>
<comment type="subcellular location">
    <subcellularLocation>
        <location evidence="7">Cell membrane</location>
        <topology evidence="7">Single-pass type I membrane protein</topology>
    </subcellularLocation>
</comment>
<comment type="tissue specificity">
    <text evidence="5">Expressed in roots, leaves, vegetative shoot apex, and reproductive floral apex.</text>
</comment>
<comment type="similarity">
    <text evidence="3">Belongs to the protein kinase superfamily. Ser/Thr protein kinase family.</text>
</comment>